<evidence type="ECO:0000255" key="1">
    <source>
        <dbReference type="HAMAP-Rule" id="MF_01346"/>
    </source>
</evidence>
<reference key="1">
    <citation type="journal article" date="2005" name="J. Bacteriol.">
        <title>Insights on evolution of virulence and resistance from the complete genome analysis of an early methicillin-resistant Staphylococcus aureus strain and a biofilm-producing methicillin-resistant Staphylococcus epidermidis strain.</title>
        <authorList>
            <person name="Gill S.R."/>
            <person name="Fouts D.E."/>
            <person name="Archer G.L."/>
            <person name="Mongodin E.F."/>
            <person name="DeBoy R.T."/>
            <person name="Ravel J."/>
            <person name="Paulsen I.T."/>
            <person name="Kolonay J.F."/>
            <person name="Brinkac L.M."/>
            <person name="Beanan M.J."/>
            <person name="Dodson R.J."/>
            <person name="Daugherty S.C."/>
            <person name="Madupu R."/>
            <person name="Angiuoli S.V."/>
            <person name="Durkin A.S."/>
            <person name="Haft D.H."/>
            <person name="Vamathevan J.J."/>
            <person name="Khouri H."/>
            <person name="Utterback T.R."/>
            <person name="Lee C."/>
            <person name="Dimitrov G."/>
            <person name="Jiang L."/>
            <person name="Qin H."/>
            <person name="Weidman J."/>
            <person name="Tran K."/>
            <person name="Kang K.H."/>
            <person name="Hance I.R."/>
            <person name="Nelson K.E."/>
            <person name="Fraser C.M."/>
        </authorList>
    </citation>
    <scope>NUCLEOTIDE SEQUENCE [LARGE SCALE GENOMIC DNA]</scope>
    <source>
        <strain>COL</strain>
    </source>
</reference>
<sequence length="502" mass="54570">MAIKAEEISALLRSQIENYESEMSVTDVGTVLQIGDGIALIHGLNDVMAGELVEFHNGVLGLAQNLEESNVGVVILGPYTGITEGDEVKRTGRIMEVPVGEELIGRVVNPLGQPIDGQGPINTTKTRPVEKKATGVMDRKSVDEPLQTGIKAIDALVPIGRGQRELIIGDRQTGKTTIAIDTILNQKDQGTICIYVAIGQKDSTVRANVEKLRQAGALDYTIVVAASASEPSPLLYIAPYSGVTMGEEFMFNGKHVLIVYDDLTKQAAAYRELSLLLRRPPGREAYPGDVFYLHSRLLERAAKLNDDLGGGSITALPIIETQAGDISAYVPTNVISITDGQIFLQSDLFFSGVRPAINAGQSVSRVGGSAQINAMKKVAGTLRLDLASYRELESFAQFGSDLDEFTASKLERGKRTVEVLKQDQNKPLPVEHQVLIIYALTKGYLDDIPVVDITRFEDELNHWAESNATELLNEIRETGGLPDAEKFDTAINEFKKSFSKSE</sequence>
<protein>
    <recommendedName>
        <fullName evidence="1">ATP synthase subunit alpha</fullName>
        <ecNumber evidence="1">7.1.2.2</ecNumber>
    </recommendedName>
    <alternativeName>
        <fullName evidence="1">ATP synthase F1 sector subunit alpha</fullName>
    </alternativeName>
    <alternativeName>
        <fullName evidence="1">F-ATPase subunit alpha</fullName>
    </alternativeName>
</protein>
<organism>
    <name type="scientific">Staphylococcus aureus (strain COL)</name>
    <dbReference type="NCBI Taxonomy" id="93062"/>
    <lineage>
        <taxon>Bacteria</taxon>
        <taxon>Bacillati</taxon>
        <taxon>Bacillota</taxon>
        <taxon>Bacilli</taxon>
        <taxon>Bacillales</taxon>
        <taxon>Staphylococcaceae</taxon>
        <taxon>Staphylococcus</taxon>
    </lineage>
</organism>
<keyword id="KW-0066">ATP synthesis</keyword>
<keyword id="KW-0067">ATP-binding</keyword>
<keyword id="KW-1003">Cell membrane</keyword>
<keyword id="KW-0139">CF(1)</keyword>
<keyword id="KW-0375">Hydrogen ion transport</keyword>
<keyword id="KW-0406">Ion transport</keyword>
<keyword id="KW-0472">Membrane</keyword>
<keyword id="KW-0547">Nucleotide-binding</keyword>
<keyword id="KW-1278">Translocase</keyword>
<keyword id="KW-0813">Transport</keyword>
<proteinExistence type="inferred from homology"/>
<comment type="function">
    <text evidence="1">Produces ATP from ADP in the presence of a proton gradient across the membrane. The alpha chain is a regulatory subunit.</text>
</comment>
<comment type="catalytic activity">
    <reaction evidence="1">
        <text>ATP + H2O + 4 H(+)(in) = ADP + phosphate + 5 H(+)(out)</text>
        <dbReference type="Rhea" id="RHEA:57720"/>
        <dbReference type="ChEBI" id="CHEBI:15377"/>
        <dbReference type="ChEBI" id="CHEBI:15378"/>
        <dbReference type="ChEBI" id="CHEBI:30616"/>
        <dbReference type="ChEBI" id="CHEBI:43474"/>
        <dbReference type="ChEBI" id="CHEBI:456216"/>
        <dbReference type="EC" id="7.1.2.2"/>
    </reaction>
</comment>
<comment type="subunit">
    <text evidence="1">F-type ATPases have 2 components, CF(1) - the catalytic core - and CF(0) - the membrane proton channel. CF(1) has five subunits: alpha(3), beta(3), gamma(1), delta(1), epsilon(1). CF(0) has three main subunits: a(1), b(2) and c(9-12). The alpha and beta chains form an alternating ring which encloses part of the gamma chain. CF(1) is attached to CF(0) by a central stalk formed by the gamma and epsilon chains, while a peripheral stalk is formed by the delta and b chains.</text>
</comment>
<comment type="subcellular location">
    <subcellularLocation>
        <location evidence="1">Cell membrane</location>
        <topology evidence="1">Peripheral membrane protein</topology>
    </subcellularLocation>
</comment>
<comment type="similarity">
    <text evidence="1">Belongs to the ATPase alpha/beta chains family.</text>
</comment>
<dbReference type="EC" id="7.1.2.2" evidence="1"/>
<dbReference type="EMBL" id="CP000046">
    <property type="protein sequence ID" value="AAW38407.1"/>
    <property type="molecule type" value="Genomic_DNA"/>
</dbReference>
<dbReference type="RefSeq" id="WP_000974882.1">
    <property type="nucleotide sequence ID" value="NZ_JBGOFO010000007.1"/>
</dbReference>
<dbReference type="SMR" id="Q5HE95"/>
<dbReference type="KEGG" id="sac:SACOL2097"/>
<dbReference type="HOGENOM" id="CLU_010091_2_1_9"/>
<dbReference type="Proteomes" id="UP000000530">
    <property type="component" value="Chromosome"/>
</dbReference>
<dbReference type="GO" id="GO:0005886">
    <property type="term" value="C:plasma membrane"/>
    <property type="evidence" value="ECO:0007669"/>
    <property type="project" value="UniProtKB-SubCell"/>
</dbReference>
<dbReference type="GO" id="GO:0045259">
    <property type="term" value="C:proton-transporting ATP synthase complex"/>
    <property type="evidence" value="ECO:0007669"/>
    <property type="project" value="UniProtKB-KW"/>
</dbReference>
<dbReference type="GO" id="GO:0043531">
    <property type="term" value="F:ADP binding"/>
    <property type="evidence" value="ECO:0007669"/>
    <property type="project" value="TreeGrafter"/>
</dbReference>
<dbReference type="GO" id="GO:0005524">
    <property type="term" value="F:ATP binding"/>
    <property type="evidence" value="ECO:0007669"/>
    <property type="project" value="UniProtKB-UniRule"/>
</dbReference>
<dbReference type="GO" id="GO:0046933">
    <property type="term" value="F:proton-transporting ATP synthase activity, rotational mechanism"/>
    <property type="evidence" value="ECO:0007669"/>
    <property type="project" value="UniProtKB-UniRule"/>
</dbReference>
<dbReference type="CDD" id="cd18113">
    <property type="entry name" value="ATP-synt_F1_alpha_C"/>
    <property type="match status" value="1"/>
</dbReference>
<dbReference type="CDD" id="cd18116">
    <property type="entry name" value="ATP-synt_F1_alpha_N"/>
    <property type="match status" value="1"/>
</dbReference>
<dbReference type="CDD" id="cd01132">
    <property type="entry name" value="F1-ATPase_alpha_CD"/>
    <property type="match status" value="1"/>
</dbReference>
<dbReference type="FunFam" id="1.20.150.20:FF:000001">
    <property type="entry name" value="ATP synthase subunit alpha"/>
    <property type="match status" value="1"/>
</dbReference>
<dbReference type="FunFam" id="2.40.30.20:FF:000001">
    <property type="entry name" value="ATP synthase subunit alpha"/>
    <property type="match status" value="1"/>
</dbReference>
<dbReference type="FunFam" id="3.40.50.300:FF:000002">
    <property type="entry name" value="ATP synthase subunit alpha"/>
    <property type="match status" value="1"/>
</dbReference>
<dbReference type="Gene3D" id="2.40.30.20">
    <property type="match status" value="1"/>
</dbReference>
<dbReference type="Gene3D" id="1.20.150.20">
    <property type="entry name" value="ATP synthase alpha/beta chain, C-terminal domain"/>
    <property type="match status" value="1"/>
</dbReference>
<dbReference type="Gene3D" id="3.40.50.300">
    <property type="entry name" value="P-loop containing nucleotide triphosphate hydrolases"/>
    <property type="match status" value="1"/>
</dbReference>
<dbReference type="HAMAP" id="MF_01346">
    <property type="entry name" value="ATP_synth_alpha_bact"/>
    <property type="match status" value="1"/>
</dbReference>
<dbReference type="InterPro" id="IPR023366">
    <property type="entry name" value="ATP_synth_asu-like_sf"/>
</dbReference>
<dbReference type="InterPro" id="IPR000793">
    <property type="entry name" value="ATP_synth_asu_C"/>
</dbReference>
<dbReference type="InterPro" id="IPR038376">
    <property type="entry name" value="ATP_synth_asu_C_sf"/>
</dbReference>
<dbReference type="InterPro" id="IPR033732">
    <property type="entry name" value="ATP_synth_F1_a_nt-bd_dom"/>
</dbReference>
<dbReference type="InterPro" id="IPR005294">
    <property type="entry name" value="ATP_synth_F1_asu"/>
</dbReference>
<dbReference type="InterPro" id="IPR020003">
    <property type="entry name" value="ATPase_a/bsu_AS"/>
</dbReference>
<dbReference type="InterPro" id="IPR004100">
    <property type="entry name" value="ATPase_F1/V1/A1_a/bsu_N"/>
</dbReference>
<dbReference type="InterPro" id="IPR036121">
    <property type="entry name" value="ATPase_F1/V1/A1_a/bsu_N_sf"/>
</dbReference>
<dbReference type="InterPro" id="IPR000194">
    <property type="entry name" value="ATPase_F1/V1/A1_a/bsu_nucl-bd"/>
</dbReference>
<dbReference type="InterPro" id="IPR027417">
    <property type="entry name" value="P-loop_NTPase"/>
</dbReference>
<dbReference type="NCBIfam" id="TIGR00962">
    <property type="entry name" value="atpA"/>
    <property type="match status" value="1"/>
</dbReference>
<dbReference type="NCBIfam" id="NF009884">
    <property type="entry name" value="PRK13343.1"/>
    <property type="match status" value="1"/>
</dbReference>
<dbReference type="PANTHER" id="PTHR48082">
    <property type="entry name" value="ATP SYNTHASE SUBUNIT ALPHA, MITOCHONDRIAL"/>
    <property type="match status" value="1"/>
</dbReference>
<dbReference type="PANTHER" id="PTHR48082:SF2">
    <property type="entry name" value="ATP SYNTHASE SUBUNIT ALPHA, MITOCHONDRIAL"/>
    <property type="match status" value="1"/>
</dbReference>
<dbReference type="Pfam" id="PF00006">
    <property type="entry name" value="ATP-synt_ab"/>
    <property type="match status" value="1"/>
</dbReference>
<dbReference type="Pfam" id="PF00306">
    <property type="entry name" value="ATP-synt_ab_C"/>
    <property type="match status" value="1"/>
</dbReference>
<dbReference type="Pfam" id="PF02874">
    <property type="entry name" value="ATP-synt_ab_N"/>
    <property type="match status" value="1"/>
</dbReference>
<dbReference type="PIRSF" id="PIRSF039088">
    <property type="entry name" value="F_ATPase_subunit_alpha"/>
    <property type="match status" value="1"/>
</dbReference>
<dbReference type="SUPFAM" id="SSF47917">
    <property type="entry name" value="C-terminal domain of alpha and beta subunits of F1 ATP synthase"/>
    <property type="match status" value="1"/>
</dbReference>
<dbReference type="SUPFAM" id="SSF50615">
    <property type="entry name" value="N-terminal domain of alpha and beta subunits of F1 ATP synthase"/>
    <property type="match status" value="1"/>
</dbReference>
<dbReference type="SUPFAM" id="SSF52540">
    <property type="entry name" value="P-loop containing nucleoside triphosphate hydrolases"/>
    <property type="match status" value="1"/>
</dbReference>
<dbReference type="PROSITE" id="PS00152">
    <property type="entry name" value="ATPASE_ALPHA_BETA"/>
    <property type="match status" value="1"/>
</dbReference>
<gene>
    <name evidence="1" type="primary">atpA</name>
    <name type="ordered locus">SACOL2097</name>
</gene>
<name>ATPA_STAAC</name>
<accession>Q5HE95</accession>
<feature type="chain" id="PRO_0000144350" description="ATP synthase subunit alpha">
    <location>
        <begin position="1"/>
        <end position="502"/>
    </location>
</feature>
<feature type="binding site" evidence="1">
    <location>
        <begin position="169"/>
        <end position="176"/>
    </location>
    <ligand>
        <name>ATP</name>
        <dbReference type="ChEBI" id="CHEBI:30616"/>
    </ligand>
</feature>
<feature type="site" description="Required for activity" evidence="1">
    <location>
        <position position="362"/>
    </location>
</feature>